<accession>P30850</accession>
<accession>P78280</accession>
<comment type="function">
    <text evidence="2 3 5">Involved in mRNA degradation. Hydrolyzes single-stranded polyribonucleotides processively in the 3' to 5' direction (PubMed:11948193). RNases 2 and R (rnr) contribute to rRNA degradation during starvation, while RNase R and PNPase (pnp) are the major contributors to quality control of rRNA during steady state growth (PubMed:21135037). This RNase is required to decrease expression of RNase PH (rnp) at 42 degrees Celsius during starvation, which in turn represses rRNA degradation (PubMed:28625967).</text>
</comment>
<comment type="catalytic activity">
    <reaction>
        <text>Exonucleolytic cleavage in the 3'- to 5'-direction to yield nucleoside 5'-phosphates.</text>
        <dbReference type="EC" id="3.1.13.1"/>
    </reaction>
</comment>
<comment type="cofactor">
    <cofactor evidence="2">
        <name>Mg(2+)</name>
        <dbReference type="ChEBI" id="CHEBI:18420"/>
    </cofactor>
</comment>
<comment type="activity regulation">
    <text evidence="2 4">Stimulated by the presence of a monovalent cation (PubMed:11948193). Acetylation leads to decreased substrate binding and decreased catalytic activity (PubMed:26847092).</text>
</comment>
<comment type="biophysicochemical properties">
    <kinetics>
        <Vmax evidence="2">109800.0 nmol/min/mg enzyme with Poly(A) as substrate</Vmax>
        <Vmax evidence="2">160.0 nmol/min/mg enzyme with 23S rRNA as substrate</Vmax>
        <Vmax evidence="2">30.0 nmol/min/mg enzyme with 16S rRNA as substrate</Vmax>
        <Vmax evidence="2">20.0 nmol/min/mg enzyme with 5S rRNA as substrate</Vmax>
    </kinetics>
    <phDependence>
        <text evidence="2">Optimum pH is 7.5-9.5.</text>
    </phDependence>
    <temperatureDependence>
        <text evidence="2">Optimum temperature is 50 degrees Celsius.</text>
    </temperatureDependence>
</comment>
<comment type="interaction">
    <interactant intactId="EBI-557325">
        <id>P30850</id>
    </interactant>
    <interactant intactId="EBI-557336">
        <id>P0A7Y0</id>
        <label>rnc</label>
    </interactant>
    <organismsDiffer>false</organismsDiffer>
    <experiments>2</experiments>
</comment>
<comment type="interaction">
    <interactant intactId="EBI-557325">
        <id>P30850</id>
    </interactant>
    <interactant intactId="EBI-543949">
        <id>P0A7W1</id>
        <label>rpsE</label>
    </interactant>
    <organismsDiffer>false</organismsDiffer>
    <experiments>3</experiments>
</comment>
<comment type="subcellular location">
    <subcellularLocation>
        <location>Cytoplasm</location>
    </subcellularLocation>
</comment>
<comment type="PTM">
    <text evidence="4">Acetylated at Lys-501 by PatZ. Deacetylated by CobB.</text>
</comment>
<comment type="disruption phenotype">
    <text evidence="5">In the presence of wild-type RNase PH (rph) 80-90% reduction in viability in stationary phase (96 hours of growth) at 31 and 42 degrees Celsius or when cells are rapidly starved at 42 degrees Celsius; if rph is also absent there is no visible phenotype under these 3 growth conditions (PubMed:28625967). Its absence leads to extensive degradation of rRNA (PubMed:28625967).</text>
</comment>
<comment type="miscellaneous">
    <text evidence="5">In K12 strains that are derived from W1485 (including MG1655 and W3110) the rph gene has a frameshift that leads to loss of its ribonuclease PH activity. In strain K12 / MG1655(Seq)* the wild-type Rph protein has been restored (PubMed:28625967).</text>
</comment>
<comment type="similarity">
    <text evidence="6">Belongs to the RNR ribonuclease family. RNase II subfamily.</text>
</comment>
<name>RNB_ECOLI</name>
<reference key="1">
    <citation type="journal article" date="1993" name="Mol. Microbiol.">
        <title>DNA sequencing and expression of the gene rnb encoding Escherichia coli ribonuclease II.</title>
        <authorList>
            <person name="Zilhao R."/>
            <person name="Camelo L."/>
            <person name="Arraiano C.M."/>
        </authorList>
    </citation>
    <scope>NUCLEOTIDE SEQUENCE [GENOMIC DNA]</scope>
    <source>
        <strain>K12</strain>
    </source>
</reference>
<reference key="2">
    <citation type="submission" date="1994-10" db="EMBL/GenBank/DDBJ databases">
        <authorList>
            <person name="Zilhao R."/>
        </authorList>
    </citation>
    <scope>SEQUENCE REVISION</scope>
</reference>
<reference key="3">
    <citation type="journal article" date="1996" name="DNA Res.">
        <title>A 570-kb DNA sequence of the Escherichia coli K-12 genome corresponding to the 28.0-40.1 min region on the linkage map.</title>
        <authorList>
            <person name="Aiba H."/>
            <person name="Baba T."/>
            <person name="Fujita K."/>
            <person name="Hayashi K."/>
            <person name="Inada T."/>
            <person name="Isono K."/>
            <person name="Itoh T."/>
            <person name="Kasai H."/>
            <person name="Kashimoto K."/>
            <person name="Kimura S."/>
            <person name="Kitakawa M."/>
            <person name="Kitagawa M."/>
            <person name="Makino K."/>
            <person name="Miki T."/>
            <person name="Mizobuchi K."/>
            <person name="Mori H."/>
            <person name="Mori T."/>
            <person name="Motomura K."/>
            <person name="Nakade S."/>
            <person name="Nakamura Y."/>
            <person name="Nashimoto H."/>
            <person name="Nishio Y."/>
            <person name="Oshima T."/>
            <person name="Saito N."/>
            <person name="Sampei G."/>
            <person name="Seki Y."/>
            <person name="Sivasundaram S."/>
            <person name="Tagami H."/>
            <person name="Takeda J."/>
            <person name="Takemoto K."/>
            <person name="Takeuchi Y."/>
            <person name="Wada C."/>
            <person name="Yamamoto Y."/>
            <person name="Horiuchi T."/>
        </authorList>
    </citation>
    <scope>NUCLEOTIDE SEQUENCE [LARGE SCALE GENOMIC DNA]</scope>
    <source>
        <strain>K12 / W3110 / ATCC 27325 / DSM 5911</strain>
    </source>
</reference>
<reference key="4">
    <citation type="journal article" date="1997" name="Science">
        <title>The complete genome sequence of Escherichia coli K-12.</title>
        <authorList>
            <person name="Blattner F.R."/>
            <person name="Plunkett G. III"/>
            <person name="Bloch C.A."/>
            <person name="Perna N.T."/>
            <person name="Burland V."/>
            <person name="Riley M."/>
            <person name="Collado-Vides J."/>
            <person name="Glasner J.D."/>
            <person name="Rode C.K."/>
            <person name="Mayhew G.F."/>
            <person name="Gregor J."/>
            <person name="Davis N.W."/>
            <person name="Kirkpatrick H.A."/>
            <person name="Goeden M.A."/>
            <person name="Rose D.J."/>
            <person name="Mau B."/>
            <person name="Shao Y."/>
        </authorList>
    </citation>
    <scope>NUCLEOTIDE SEQUENCE [LARGE SCALE GENOMIC DNA]</scope>
    <source>
        <strain>K12 / MG1655 / ATCC 47076</strain>
    </source>
</reference>
<reference key="5">
    <citation type="journal article" date="2006" name="Mol. Syst. Biol.">
        <title>Highly accurate genome sequences of Escherichia coli K-12 strains MG1655 and W3110.</title>
        <authorList>
            <person name="Hayashi K."/>
            <person name="Morooka N."/>
            <person name="Yamamoto Y."/>
            <person name="Fujita K."/>
            <person name="Isono K."/>
            <person name="Choi S."/>
            <person name="Ohtsubo E."/>
            <person name="Baba T."/>
            <person name="Wanner B.L."/>
            <person name="Mori H."/>
            <person name="Horiuchi T."/>
        </authorList>
    </citation>
    <scope>NUCLEOTIDE SEQUENCE [LARGE SCALE GENOMIC DNA]</scope>
    <source>
        <strain>K12 / W3110 / ATCC 27325 / DSM 5911</strain>
    </source>
</reference>
<reference key="6">
    <citation type="journal article" date="2002" name="J. Biol. Chem.">
        <title>Purification and characterization of the Escherichia coli exoribonuclease RNase R. Comparison with RNase II.</title>
        <authorList>
            <person name="Cheng Z.F."/>
            <person name="Deutscher M.P."/>
        </authorList>
    </citation>
    <scope>FUNCTION</scope>
    <scope>COFACTOR</scope>
    <scope>ACTIVITY REGULATION</scope>
    <scope>BIOPHYSICOCHEMICAL PROPERTIES</scope>
</reference>
<reference key="7">
    <citation type="journal article" date="2011" name="RNA">
        <title>Degradation of ribosomal RNA during starvation: comparison to quality control during steady-state growth and a role for RNase PH.</title>
        <authorList>
            <person name="Basturea G.N."/>
            <person name="Zundel M.A."/>
            <person name="Deutscher M.P."/>
        </authorList>
    </citation>
    <scope>FUNCTION IN RIBOSOME DEGRADATION DURING STARVATION AND QUALITY CONTROL</scope>
    <source>
        <strain>K12 / MG1655(Seq)*</strain>
    </source>
</reference>
<reference key="8">
    <citation type="journal article" date="2016" name="Nucleic Acids Res.">
        <title>Reversible acetylation on Lys501 regulates the activity of RNase II.</title>
        <authorList>
            <person name="Song L."/>
            <person name="Wang G."/>
            <person name="Malhotra A."/>
            <person name="Deutscher M.P."/>
            <person name="Liang W."/>
        </authorList>
    </citation>
    <scope>ACETYLATION AT LYS-501</scope>
    <scope>ACTIVITY REGULATION</scope>
    <scope>MUTAGENESIS OF LYS-501</scope>
    <source>
        <strain>K12</strain>
    </source>
</reference>
<reference key="9">
    <citation type="journal article" date="2017" name="RNA">
        <title>RNase II regulates RNase PH and is essential for cell survival during starvation and stationary phase.</title>
        <authorList>
            <person name="Sulthana S."/>
            <person name="Quesada E."/>
            <person name="Deutscher M.P."/>
        </authorList>
    </citation>
    <scope>FUNCTION</scope>
    <scope>DISRUPTION PHENOTYPE</scope>
    <source>
        <strain>K12 / MG1655(Seq)*</strain>
    </source>
</reference>
<feature type="chain" id="PRO_0000166380" description="Exoribonuclease 2">
    <location>
        <begin position="1"/>
        <end position="644"/>
    </location>
</feature>
<feature type="domain" description="RNB" evidence="1">
    <location>
        <begin position="189"/>
        <end position="516"/>
    </location>
</feature>
<feature type="domain" description="S1 motif">
    <location>
        <begin position="561"/>
        <end position="643"/>
    </location>
</feature>
<feature type="modified residue" description="N6-acetyllysine; by PatZ" evidence="4">
    <location>
        <position position="501"/>
    </location>
</feature>
<feature type="mutagenesis site" description="Strong decrease in acetylation." evidence="4">
    <original>K</original>
    <variation>Q</variation>
    <variation>R</variation>
    <location>
        <position position="501"/>
    </location>
</feature>
<feature type="sequence conflict" description="In Ref. 1; CAA48112." evidence="6" ref="1">
    <original>I</original>
    <variation>N</variation>
    <location>
        <position position="384"/>
    </location>
</feature>
<feature type="sequence conflict" description="In Ref. 1; CAA48112." evidence="6" ref="1">
    <original>C</original>
    <variation>G</variation>
    <location>
        <position position="399"/>
    </location>
</feature>
<feature type="sequence conflict" description="In Ref. 1; CAA48112." evidence="6" ref="1">
    <original>A</original>
    <variation>R</variation>
    <location>
        <position position="513"/>
    </location>
</feature>
<feature type="helix" evidence="7">
    <location>
        <begin position="6"/>
        <end position="17"/>
    </location>
</feature>
<feature type="strand" evidence="7">
    <location>
        <begin position="21"/>
        <end position="27"/>
    </location>
</feature>
<feature type="strand" evidence="7">
    <location>
        <begin position="30"/>
        <end position="32"/>
    </location>
</feature>
<feature type="strand" evidence="7">
    <location>
        <begin position="34"/>
        <end position="37"/>
    </location>
</feature>
<feature type="strand" evidence="7">
    <location>
        <begin position="39"/>
        <end position="41"/>
    </location>
</feature>
<feature type="strand" evidence="7">
    <location>
        <begin position="43"/>
        <end position="46"/>
    </location>
</feature>
<feature type="helix" evidence="7">
    <location>
        <begin position="48"/>
        <end position="51"/>
    </location>
</feature>
<feature type="strand" evidence="7">
    <location>
        <begin position="59"/>
        <end position="65"/>
    </location>
</feature>
<feature type="strand" evidence="7">
    <location>
        <begin position="68"/>
        <end position="70"/>
    </location>
</feature>
<feature type="strand" evidence="7">
    <location>
        <begin position="72"/>
        <end position="80"/>
    </location>
</feature>
<feature type="strand" evidence="7">
    <location>
        <begin position="84"/>
        <end position="93"/>
    </location>
</feature>
<feature type="strand" evidence="7">
    <location>
        <begin position="96"/>
        <end position="103"/>
    </location>
</feature>
<feature type="strand" evidence="8">
    <location>
        <begin position="110"/>
        <end position="114"/>
    </location>
</feature>
<feature type="strand" evidence="7">
    <location>
        <begin position="127"/>
        <end position="134"/>
    </location>
</feature>
<feature type="helix" evidence="7">
    <location>
        <begin position="136"/>
        <end position="138"/>
    </location>
</feature>
<feature type="strand" evidence="7">
    <location>
        <begin position="144"/>
        <end position="152"/>
    </location>
</feature>
<feature type="helix" evidence="7">
    <location>
        <begin position="159"/>
        <end position="167"/>
    </location>
</feature>
<feature type="strand" evidence="7">
    <location>
        <begin position="198"/>
        <end position="201"/>
    </location>
</feature>
<feature type="strand" evidence="7">
    <location>
        <begin position="210"/>
        <end position="214"/>
    </location>
</feature>
<feature type="strand" evidence="7">
    <location>
        <begin position="218"/>
        <end position="220"/>
    </location>
</feature>
<feature type="strand" evidence="7">
    <location>
        <begin position="222"/>
        <end position="229"/>
    </location>
</feature>
<feature type="helix" evidence="7">
    <location>
        <begin position="231"/>
        <end position="233"/>
    </location>
</feature>
<feature type="helix" evidence="7">
    <location>
        <begin position="240"/>
        <end position="248"/>
    </location>
</feature>
<feature type="strand" evidence="7">
    <location>
        <begin position="252"/>
        <end position="254"/>
    </location>
</feature>
<feature type="strand" evidence="7">
    <location>
        <begin position="257"/>
        <end position="259"/>
    </location>
</feature>
<feature type="helix" evidence="7">
    <location>
        <begin position="264"/>
        <end position="267"/>
    </location>
</feature>
<feature type="turn" evidence="7">
    <location>
        <begin position="268"/>
        <end position="270"/>
    </location>
</feature>
<feature type="strand" evidence="7">
    <location>
        <begin position="278"/>
        <end position="288"/>
    </location>
</feature>
<feature type="strand" evidence="7">
    <location>
        <begin position="300"/>
        <end position="306"/>
    </location>
</feature>
<feature type="strand" evidence="7">
    <location>
        <begin position="310"/>
        <end position="312"/>
    </location>
</feature>
<feature type="helix" evidence="7">
    <location>
        <begin position="313"/>
        <end position="319"/>
    </location>
</feature>
<feature type="helix" evidence="7">
    <location>
        <begin position="331"/>
        <end position="354"/>
    </location>
</feature>
<feature type="strand" evidence="7">
    <location>
        <begin position="364"/>
        <end position="368"/>
    </location>
</feature>
<feature type="strand" evidence="7">
    <location>
        <begin position="374"/>
        <end position="379"/>
    </location>
</feature>
<feature type="helix" evidence="7">
    <location>
        <begin position="384"/>
        <end position="407"/>
    </location>
</feature>
<feature type="strand" evidence="7">
    <location>
        <begin position="413"/>
        <end position="416"/>
    </location>
</feature>
<feature type="turn" evidence="7">
    <location>
        <begin position="421"/>
        <end position="423"/>
    </location>
</feature>
<feature type="helix" evidence="7">
    <location>
        <begin position="424"/>
        <end position="434"/>
    </location>
</feature>
<feature type="helix" evidence="7">
    <location>
        <begin position="440"/>
        <end position="443"/>
    </location>
</feature>
<feature type="helix" evidence="7">
    <location>
        <begin position="446"/>
        <end position="457"/>
    </location>
</feature>
<feature type="strand" evidence="7">
    <location>
        <begin position="459"/>
        <end position="462"/>
    </location>
</feature>
<feature type="helix" evidence="7">
    <location>
        <begin position="463"/>
        <end position="468"/>
    </location>
</feature>
<feature type="helix" evidence="9">
    <location>
        <begin position="469"/>
        <end position="471"/>
    </location>
</feature>
<feature type="strand" evidence="7">
    <location>
        <begin position="476"/>
        <end position="480"/>
    </location>
</feature>
<feature type="turn" evidence="7">
    <location>
        <begin position="485"/>
        <end position="488"/>
    </location>
</feature>
<feature type="strand" evidence="7">
    <location>
        <begin position="489"/>
        <end position="491"/>
    </location>
</feature>
<feature type="turn" evidence="7">
    <location>
        <begin position="498"/>
        <end position="500"/>
    </location>
</feature>
<feature type="helix" evidence="7">
    <location>
        <begin position="502"/>
        <end position="514"/>
    </location>
</feature>
<feature type="helix" evidence="7">
    <location>
        <begin position="527"/>
        <end position="554"/>
    </location>
</feature>
<feature type="helix" evidence="7">
    <location>
        <begin position="555"/>
        <end position="557"/>
    </location>
</feature>
<feature type="strand" evidence="7">
    <location>
        <begin position="564"/>
        <end position="572"/>
    </location>
</feature>
<feature type="strand" evidence="7">
    <location>
        <begin position="575"/>
        <end position="580"/>
    </location>
</feature>
<feature type="turn" evidence="7">
    <location>
        <begin position="581"/>
        <end position="583"/>
    </location>
</feature>
<feature type="strand" evidence="7">
    <location>
        <begin position="586"/>
        <end position="590"/>
    </location>
</feature>
<feature type="helix" evidence="7">
    <location>
        <begin position="591"/>
        <end position="593"/>
    </location>
</feature>
<feature type="helix" evidence="7">
    <location>
        <begin position="598"/>
        <end position="600"/>
    </location>
</feature>
<feature type="strand" evidence="7">
    <location>
        <begin position="601"/>
        <end position="604"/>
    </location>
</feature>
<feature type="turn" evidence="7">
    <location>
        <begin position="605"/>
        <end position="608"/>
    </location>
</feature>
<feature type="strand" evidence="7">
    <location>
        <begin position="609"/>
        <end position="612"/>
    </location>
</feature>
<feature type="strand" evidence="7">
    <location>
        <begin position="615"/>
        <end position="619"/>
    </location>
</feature>
<feature type="strand" evidence="7">
    <location>
        <begin position="623"/>
        <end position="632"/>
    </location>
</feature>
<feature type="turn" evidence="7">
    <location>
        <begin position="633"/>
        <end position="636"/>
    </location>
</feature>
<feature type="strand" evidence="7">
    <location>
        <begin position="637"/>
        <end position="642"/>
    </location>
</feature>
<gene>
    <name type="primary">rnb</name>
    <name type="ordered locus">b1286</name>
    <name type="ordered locus">JW1279</name>
</gene>
<organism>
    <name type="scientific">Escherichia coli (strain K12)</name>
    <dbReference type="NCBI Taxonomy" id="83333"/>
    <lineage>
        <taxon>Bacteria</taxon>
        <taxon>Pseudomonadati</taxon>
        <taxon>Pseudomonadota</taxon>
        <taxon>Gammaproteobacteria</taxon>
        <taxon>Enterobacterales</taxon>
        <taxon>Enterobacteriaceae</taxon>
        <taxon>Escherichia</taxon>
    </lineage>
</organism>
<proteinExistence type="evidence at protein level"/>
<evidence type="ECO:0000255" key="1"/>
<evidence type="ECO:0000269" key="2">
    <source>
    </source>
</evidence>
<evidence type="ECO:0000269" key="3">
    <source>
    </source>
</evidence>
<evidence type="ECO:0000269" key="4">
    <source>
    </source>
</evidence>
<evidence type="ECO:0000269" key="5">
    <source>
    </source>
</evidence>
<evidence type="ECO:0000305" key="6"/>
<evidence type="ECO:0007829" key="7">
    <source>
        <dbReference type="PDB" id="2ID0"/>
    </source>
</evidence>
<evidence type="ECO:0007829" key="8">
    <source>
        <dbReference type="PDB" id="2IX0"/>
    </source>
</evidence>
<evidence type="ECO:0007829" key="9">
    <source>
        <dbReference type="PDB" id="2IX1"/>
    </source>
</evidence>
<dbReference type="EC" id="3.1.13.1"/>
<dbReference type="EMBL" id="X67913">
    <property type="protein sequence ID" value="CAA48112.1"/>
    <property type="molecule type" value="Genomic_DNA"/>
</dbReference>
<dbReference type="EMBL" id="U00096">
    <property type="protein sequence ID" value="AAC74368.1"/>
    <property type="molecule type" value="Genomic_DNA"/>
</dbReference>
<dbReference type="EMBL" id="AP009048">
    <property type="protein sequence ID" value="BAA14840.1"/>
    <property type="molecule type" value="Genomic_DNA"/>
</dbReference>
<dbReference type="PIR" id="A64877">
    <property type="entry name" value="A64877"/>
</dbReference>
<dbReference type="RefSeq" id="NP_415802.1">
    <property type="nucleotide sequence ID" value="NC_000913.3"/>
</dbReference>
<dbReference type="RefSeq" id="WP_000484984.1">
    <property type="nucleotide sequence ID" value="NZ_SSZK01000012.1"/>
</dbReference>
<dbReference type="PDB" id="2ID0">
    <property type="method" value="X-ray"/>
    <property type="resolution" value="2.35 A"/>
    <property type="chains" value="A/B/C/D=1-644"/>
</dbReference>
<dbReference type="PDB" id="2IX0">
    <property type="method" value="X-ray"/>
    <property type="resolution" value="2.44 A"/>
    <property type="chains" value="A=6-644"/>
</dbReference>
<dbReference type="PDB" id="2IX1">
    <property type="method" value="X-ray"/>
    <property type="resolution" value="2.74 A"/>
    <property type="chains" value="A=6-644"/>
</dbReference>
<dbReference type="PDBsum" id="2ID0"/>
<dbReference type="PDBsum" id="2IX0"/>
<dbReference type="PDBsum" id="2IX1"/>
<dbReference type="SMR" id="P30850"/>
<dbReference type="BioGRID" id="4263341">
    <property type="interactions" value="52"/>
</dbReference>
<dbReference type="BioGRID" id="850231">
    <property type="interactions" value="1"/>
</dbReference>
<dbReference type="DIP" id="DIP-10724N"/>
<dbReference type="FunCoup" id="P30850">
    <property type="interactions" value="98"/>
</dbReference>
<dbReference type="IntAct" id="P30850">
    <property type="interactions" value="10"/>
</dbReference>
<dbReference type="STRING" id="511145.b1286"/>
<dbReference type="iPTMnet" id="P30850"/>
<dbReference type="jPOST" id="P30850"/>
<dbReference type="PaxDb" id="511145-b1286"/>
<dbReference type="EnsemblBacteria" id="AAC74368">
    <property type="protein sequence ID" value="AAC74368"/>
    <property type="gene ID" value="b1286"/>
</dbReference>
<dbReference type="GeneID" id="945864"/>
<dbReference type="KEGG" id="ecj:JW1279"/>
<dbReference type="KEGG" id="eco:b1286"/>
<dbReference type="KEGG" id="ecoc:C3026_07555"/>
<dbReference type="PATRIC" id="fig|1411691.4.peg.993"/>
<dbReference type="EchoBASE" id="EB1577"/>
<dbReference type="eggNOG" id="COG4776">
    <property type="taxonomic scope" value="Bacteria"/>
</dbReference>
<dbReference type="HOGENOM" id="CLU_002333_7_3_6"/>
<dbReference type="InParanoid" id="P30850"/>
<dbReference type="OMA" id="MVNHRLI"/>
<dbReference type="OrthoDB" id="9764149at2"/>
<dbReference type="PhylomeDB" id="P30850"/>
<dbReference type="BioCyc" id="EcoCyc:EG11620-MONOMER"/>
<dbReference type="BioCyc" id="MetaCyc:EG11620-MONOMER"/>
<dbReference type="BRENDA" id="3.1.13.1">
    <property type="organism ID" value="2026"/>
</dbReference>
<dbReference type="EvolutionaryTrace" id="P30850"/>
<dbReference type="PRO" id="PR:P30850"/>
<dbReference type="Proteomes" id="UP000000625">
    <property type="component" value="Chromosome"/>
</dbReference>
<dbReference type="GO" id="GO:0005829">
    <property type="term" value="C:cytosol"/>
    <property type="evidence" value="ECO:0000314"/>
    <property type="project" value="EcoCyc"/>
</dbReference>
<dbReference type="GO" id="GO:0008408">
    <property type="term" value="F:3'-5' exonuclease activity"/>
    <property type="evidence" value="ECO:0000314"/>
    <property type="project" value="EcoCyc"/>
</dbReference>
<dbReference type="GO" id="GO:0008859">
    <property type="term" value="F:exoribonuclease II activity"/>
    <property type="evidence" value="ECO:0007669"/>
    <property type="project" value="UniProtKB-UniRule"/>
</dbReference>
<dbReference type="GO" id="GO:0003723">
    <property type="term" value="F:RNA binding"/>
    <property type="evidence" value="ECO:0007669"/>
    <property type="project" value="UniProtKB-KW"/>
</dbReference>
<dbReference type="GO" id="GO:0006402">
    <property type="term" value="P:mRNA catabolic process"/>
    <property type="evidence" value="ECO:0000318"/>
    <property type="project" value="GO_Central"/>
</dbReference>
<dbReference type="GO" id="GO:0016078">
    <property type="term" value="P:tRNA decay"/>
    <property type="evidence" value="ECO:0000269"/>
    <property type="project" value="EcoCyc"/>
</dbReference>
<dbReference type="FunFam" id="2.40.50.140:FF:000079">
    <property type="entry name" value="Exoribonuclease 2"/>
    <property type="match status" value="1"/>
</dbReference>
<dbReference type="FunFam" id="2.40.50.140:FF:000081">
    <property type="entry name" value="Exoribonuclease 2"/>
    <property type="match status" value="1"/>
</dbReference>
<dbReference type="FunFam" id="2.40.50.640:FF:000001">
    <property type="entry name" value="Exoribonuclease 2"/>
    <property type="match status" value="1"/>
</dbReference>
<dbReference type="Gene3D" id="2.40.50.640">
    <property type="match status" value="1"/>
</dbReference>
<dbReference type="Gene3D" id="2.40.50.140">
    <property type="entry name" value="Nucleic acid-binding proteins"/>
    <property type="match status" value="2"/>
</dbReference>
<dbReference type="HAMAP" id="MF_01036">
    <property type="entry name" value="RNase_II"/>
    <property type="match status" value="1"/>
</dbReference>
<dbReference type="InterPro" id="IPR011129">
    <property type="entry name" value="CSD"/>
</dbReference>
<dbReference type="InterPro" id="IPR012340">
    <property type="entry name" value="NA-bd_OB-fold"/>
</dbReference>
<dbReference type="InterPro" id="IPR013223">
    <property type="entry name" value="RNase_B_OB_dom"/>
</dbReference>
<dbReference type="InterPro" id="IPR011804">
    <property type="entry name" value="RNase_II"/>
</dbReference>
<dbReference type="InterPro" id="IPR001900">
    <property type="entry name" value="RNase_II/R"/>
</dbReference>
<dbReference type="InterPro" id="IPR022966">
    <property type="entry name" value="RNase_II/R_CS"/>
</dbReference>
<dbReference type="InterPro" id="IPR004476">
    <property type="entry name" value="RNase_II/RNase_R"/>
</dbReference>
<dbReference type="InterPro" id="IPR050180">
    <property type="entry name" value="RNR_Ribonuclease"/>
</dbReference>
<dbReference type="InterPro" id="IPR003029">
    <property type="entry name" value="S1_domain"/>
</dbReference>
<dbReference type="NCBIfam" id="TIGR00358">
    <property type="entry name" value="3_prime_RNase"/>
    <property type="match status" value="1"/>
</dbReference>
<dbReference type="NCBIfam" id="NF003455">
    <property type="entry name" value="PRK05054.1"/>
    <property type="match status" value="1"/>
</dbReference>
<dbReference type="NCBIfam" id="TIGR02062">
    <property type="entry name" value="RNase_B"/>
    <property type="match status" value="1"/>
</dbReference>
<dbReference type="PANTHER" id="PTHR23355:SF37">
    <property type="entry name" value="EXORIBONUCLEASE 2"/>
    <property type="match status" value="1"/>
</dbReference>
<dbReference type="PANTHER" id="PTHR23355">
    <property type="entry name" value="RIBONUCLEASE"/>
    <property type="match status" value="1"/>
</dbReference>
<dbReference type="Pfam" id="PF08206">
    <property type="entry name" value="OB_RNB"/>
    <property type="match status" value="1"/>
</dbReference>
<dbReference type="Pfam" id="PF00773">
    <property type="entry name" value="RNB"/>
    <property type="match status" value="1"/>
</dbReference>
<dbReference type="Pfam" id="PF00575">
    <property type="entry name" value="S1"/>
    <property type="match status" value="1"/>
</dbReference>
<dbReference type="SMART" id="SM00357">
    <property type="entry name" value="CSP"/>
    <property type="match status" value="1"/>
</dbReference>
<dbReference type="SMART" id="SM00955">
    <property type="entry name" value="RNB"/>
    <property type="match status" value="1"/>
</dbReference>
<dbReference type="SUPFAM" id="SSF50249">
    <property type="entry name" value="Nucleic acid-binding proteins"/>
    <property type="match status" value="4"/>
</dbReference>
<dbReference type="PROSITE" id="PS01175">
    <property type="entry name" value="RIBONUCLEASE_II"/>
    <property type="match status" value="1"/>
</dbReference>
<sequence>MFQDNPLLAQLKQQLHSQTPRAEGVVKATEKGFGFLEVDAQKSYFIPPPQMKKVMHGDRIIAVIHSEKERESAEPEELVEPFLTRFVGKVQGKNDRLAIVPDHPLLKDAIPCRAARGLNHEFKEGDWAVAEMRRHPLKGDRSFYAELTQYITFGDDHFVPWWVTLARHNLEKEAPDGVATEMLDEGLVREDLTALDFVTIDSASTEDMDDALFAKALPDDKLQLIVAIADPTAWIAEGSKLDKAAKIRAFTNYLPGFNIPMLPRELSDDLCSLRANEVRPVLACRMTLSADGTIEDNIEFFAATIESKAKLVYDQVSDWLENTGDWQPESEAIAEQVRLLAQICQRRGEWRHNHALVFKDRPDYRFILGEKGEVLDIVAEPRRIANRIVEEAMIAANICAARVLRDKLGFGIYNVHMGFDPANADALAALLKTHGLHVDAEEVLTLDGFCKLRRELDAQPTGFLDSRIRRFQSFAEISTEPGPHFGLGLEAYATWTSPIRKYGDMINHRLLKAVIKGETATRPQDEITVQMAERRRLNRMAERDVGDWLYARFLKDKAGTDTRFAAEIVDISRGGMRVRLVDNGAIAFIPAPFLHAVRDELVCSQENGTVQIKGETVYKVTDVIDVTIAEVRMETRSIIARPVA</sequence>
<keyword id="KW-0002">3D-structure</keyword>
<keyword id="KW-0007">Acetylation</keyword>
<keyword id="KW-0963">Cytoplasm</keyword>
<keyword id="KW-0269">Exonuclease</keyword>
<keyword id="KW-0378">Hydrolase</keyword>
<keyword id="KW-0540">Nuclease</keyword>
<keyword id="KW-1185">Reference proteome</keyword>
<keyword id="KW-0694">RNA-binding</keyword>
<protein>
    <recommendedName>
        <fullName>Exoribonuclease 2</fullName>
        <ecNumber>3.1.13.1</ecNumber>
    </recommendedName>
    <alternativeName>
        <fullName>Exoribonuclease II</fullName>
        <shortName>RNase II</shortName>
        <shortName>Ribonuclease II</shortName>
    </alternativeName>
</protein>